<accession>Q88FX9</accession>
<evidence type="ECO:0000250" key="1"/>
<evidence type="ECO:0000255" key="2">
    <source>
        <dbReference type="PROSITE-ProRule" id="PRU00465"/>
    </source>
</evidence>
<evidence type="ECO:0000269" key="3">
    <source>
    </source>
</evidence>
<evidence type="ECO:0000269" key="4">
    <source>
    </source>
</evidence>
<evidence type="ECO:0000269" key="5">
    <source>
    </source>
</evidence>
<keyword id="KW-0001">2Fe-2S</keyword>
<keyword id="KW-0058">Aromatic hydrocarbons catabolism</keyword>
<keyword id="KW-0408">Iron</keyword>
<keyword id="KW-0411">Iron-sulfur</keyword>
<keyword id="KW-0479">Metal-binding</keyword>
<keyword id="KW-0560">Oxidoreductase</keyword>
<keyword id="KW-1185">Reference proteome</keyword>
<reference key="1">
    <citation type="journal article" date="2009" name="Biodegradation">
        <title>Cloning, heterologous expression, and functional characterization of the nicotinate dehydrogenase gene from Pseudomonas putida KT2440.</title>
        <authorList>
            <person name="Yang Y."/>
            <person name="Yuan S."/>
            <person name="Chen T."/>
            <person name="Ma P."/>
            <person name="Shang G."/>
            <person name="Dai Y."/>
        </authorList>
    </citation>
    <scope>NUCLEOTIDE SEQUENCE [GENOMIC DNA]</scope>
    <scope>FUNCTION</scope>
    <scope>DISRUPTION PHENOTYPE</scope>
    <source>
        <strain>ATCC 47054 / DSM 6125 / CFBP 8728 / NCIMB 11950 / KT2440</strain>
    </source>
</reference>
<reference key="2">
    <citation type="journal article" date="2002" name="Environ. Microbiol.">
        <title>Complete genome sequence and comparative analysis of the metabolically versatile Pseudomonas putida KT2440.</title>
        <authorList>
            <person name="Nelson K.E."/>
            <person name="Weinel C."/>
            <person name="Paulsen I.T."/>
            <person name="Dodson R.J."/>
            <person name="Hilbert H."/>
            <person name="Martins dos Santos V.A.P."/>
            <person name="Fouts D.E."/>
            <person name="Gill S.R."/>
            <person name="Pop M."/>
            <person name="Holmes M."/>
            <person name="Brinkac L.M."/>
            <person name="Beanan M.J."/>
            <person name="DeBoy R.T."/>
            <person name="Daugherty S.C."/>
            <person name="Kolonay J.F."/>
            <person name="Madupu R."/>
            <person name="Nelson W.C."/>
            <person name="White O."/>
            <person name="Peterson J.D."/>
            <person name="Khouri H.M."/>
            <person name="Hance I."/>
            <person name="Chris Lee P."/>
            <person name="Holtzapple E.K."/>
            <person name="Scanlan D."/>
            <person name="Tran K."/>
            <person name="Moazzez A."/>
            <person name="Utterback T.R."/>
            <person name="Rizzo M."/>
            <person name="Lee K."/>
            <person name="Kosack D."/>
            <person name="Moestl D."/>
            <person name="Wedler H."/>
            <person name="Lauber J."/>
            <person name="Stjepandic D."/>
            <person name="Hoheisel J."/>
            <person name="Straetz M."/>
            <person name="Heim S."/>
            <person name="Kiewitz C."/>
            <person name="Eisen J.A."/>
            <person name="Timmis K.N."/>
            <person name="Duesterhoeft A."/>
            <person name="Tuemmler B."/>
            <person name="Fraser C.M."/>
        </authorList>
    </citation>
    <scope>NUCLEOTIDE SEQUENCE [LARGE SCALE GENOMIC DNA]</scope>
    <source>
        <strain>ATCC 47054 / DSM 6125 / CFBP 8728 / NCIMB 11950 / KT2440</strain>
    </source>
</reference>
<reference key="3">
    <citation type="journal article" date="2008" name="Proc. Natl. Acad. Sci. U.S.A.">
        <title>Deciphering the genetic determinants for aerobic nicotinic acid degradation: the nic cluster from Pseudomonas putida KT2440.</title>
        <authorList>
            <person name="Jimenez J.I."/>
            <person name="Canales A."/>
            <person name="Jimenez-Barbero J."/>
            <person name="Ginalski K."/>
            <person name="Rychlewski L."/>
            <person name="Garcia J.L."/>
            <person name="Diaz E."/>
        </authorList>
    </citation>
    <scope>FUNCTION</scope>
    <scope>CATALYTIC ACTIVITY</scope>
    <scope>PATHWAY</scope>
    <scope>DISRUPTION PHENOTYPE</scope>
    <source>
        <strain>ATCC 47054 / DSM 6125 / CFBP 8728 / NCIMB 11950 / KT2440</strain>
    </source>
</reference>
<reference key="4">
    <citation type="journal article" date="2011" name="Environ. Microbiol.">
        <title>A finely tuned regulatory circuit of the nicotinic acid degradation pathway in Pseudomonas putida.</title>
        <authorList>
            <person name="Jimenez J.I."/>
            <person name="Juarez J.F."/>
            <person name="Garcia J.L."/>
            <person name="Diaz E."/>
        </authorList>
    </citation>
    <scope>INDUCTION</scope>
    <source>
        <strain>ATCC 47054 / DSM 6125 / CFBP 8728 / NCIMB 11950 / KT2440</strain>
    </source>
</reference>
<protein>
    <recommendedName>
        <fullName>Nicotinate dehydrogenase subunit A</fullName>
        <ecNumber>1.17.2.1</ecNumber>
    </recommendedName>
    <alternativeName>
        <fullName>Nicotinate degradation protein A</fullName>
    </alternativeName>
    <alternativeName>
        <fullName>Nicotinate dehydrogenase small subunit</fullName>
    </alternativeName>
</protein>
<dbReference type="EC" id="1.17.2.1"/>
<dbReference type="EMBL" id="EU604833">
    <property type="protein sequence ID" value="ACC64339.1"/>
    <property type="molecule type" value="Genomic_DNA"/>
</dbReference>
<dbReference type="EMBL" id="AE015451">
    <property type="protein sequence ID" value="AAN69541.1"/>
    <property type="molecule type" value="Genomic_DNA"/>
</dbReference>
<dbReference type="RefSeq" id="NP_746077.1">
    <property type="nucleotide sequence ID" value="NC_002947.4"/>
</dbReference>
<dbReference type="RefSeq" id="WP_010954764.1">
    <property type="nucleotide sequence ID" value="NZ_CP169744.1"/>
</dbReference>
<dbReference type="SMR" id="Q88FX9"/>
<dbReference type="STRING" id="160488.PP_3947"/>
<dbReference type="PaxDb" id="160488-PP_3947"/>
<dbReference type="KEGG" id="ppu:PP_3947"/>
<dbReference type="PATRIC" id="fig|160488.4.peg.4203"/>
<dbReference type="eggNOG" id="COG2080">
    <property type="taxonomic scope" value="Bacteria"/>
</dbReference>
<dbReference type="HOGENOM" id="CLU_052511_3_0_6"/>
<dbReference type="OrthoDB" id="9775084at2"/>
<dbReference type="PhylomeDB" id="Q88FX9"/>
<dbReference type="BioCyc" id="MetaCyc:G1G01-4212-MONOMER"/>
<dbReference type="BioCyc" id="PPUT160488:G1G01-4212-MONOMER"/>
<dbReference type="BRENDA" id="1.17.2.1">
    <property type="organism ID" value="5092"/>
</dbReference>
<dbReference type="UniPathway" id="UPA01010"/>
<dbReference type="Proteomes" id="UP000000556">
    <property type="component" value="Chromosome"/>
</dbReference>
<dbReference type="GO" id="GO:0051537">
    <property type="term" value="F:2 iron, 2 sulfur cluster binding"/>
    <property type="evidence" value="ECO:0007669"/>
    <property type="project" value="UniProtKB-KW"/>
</dbReference>
<dbReference type="GO" id="GO:0046872">
    <property type="term" value="F:metal ion binding"/>
    <property type="evidence" value="ECO:0007669"/>
    <property type="project" value="UniProtKB-KW"/>
</dbReference>
<dbReference type="GO" id="GO:0016725">
    <property type="term" value="F:oxidoreductase activity, acting on CH or CH2 groups"/>
    <property type="evidence" value="ECO:0000314"/>
    <property type="project" value="UniProtKB"/>
</dbReference>
<dbReference type="GO" id="GO:1901848">
    <property type="term" value="P:nicotinate catabolic process"/>
    <property type="evidence" value="ECO:0000314"/>
    <property type="project" value="UniProtKB"/>
</dbReference>
<dbReference type="CDD" id="cd00207">
    <property type="entry name" value="fer2"/>
    <property type="match status" value="1"/>
</dbReference>
<dbReference type="FunFam" id="1.10.150.120:FF:000003">
    <property type="entry name" value="Carbon monoxide dehydrogenase, small subunit"/>
    <property type="match status" value="1"/>
</dbReference>
<dbReference type="Gene3D" id="3.10.20.30">
    <property type="match status" value="1"/>
</dbReference>
<dbReference type="Gene3D" id="1.10.150.120">
    <property type="entry name" value="[2Fe-2S]-binding domain"/>
    <property type="match status" value="1"/>
</dbReference>
<dbReference type="InterPro" id="IPR002888">
    <property type="entry name" value="2Fe-2S-bd"/>
</dbReference>
<dbReference type="InterPro" id="IPR036884">
    <property type="entry name" value="2Fe-2S-bd_dom_sf"/>
</dbReference>
<dbReference type="InterPro" id="IPR036010">
    <property type="entry name" value="2Fe-2S_ferredoxin-like_sf"/>
</dbReference>
<dbReference type="InterPro" id="IPR001041">
    <property type="entry name" value="2Fe-2S_ferredoxin-type"/>
</dbReference>
<dbReference type="InterPro" id="IPR006058">
    <property type="entry name" value="2Fe2S_fd_BS"/>
</dbReference>
<dbReference type="InterPro" id="IPR012675">
    <property type="entry name" value="Beta-grasp_dom_sf"/>
</dbReference>
<dbReference type="InterPro" id="IPR051452">
    <property type="entry name" value="Diverse_Oxidoreductases"/>
</dbReference>
<dbReference type="PANTHER" id="PTHR44379:SF6">
    <property type="entry name" value="BLR6046 PROTEIN"/>
    <property type="match status" value="1"/>
</dbReference>
<dbReference type="PANTHER" id="PTHR44379">
    <property type="entry name" value="OXIDOREDUCTASE WITH IRON-SULFUR SUBUNIT"/>
    <property type="match status" value="1"/>
</dbReference>
<dbReference type="Pfam" id="PF00111">
    <property type="entry name" value="Fer2"/>
    <property type="match status" value="1"/>
</dbReference>
<dbReference type="Pfam" id="PF01799">
    <property type="entry name" value="Fer2_2"/>
    <property type="match status" value="1"/>
</dbReference>
<dbReference type="SUPFAM" id="SSF54292">
    <property type="entry name" value="2Fe-2S ferredoxin-like"/>
    <property type="match status" value="1"/>
</dbReference>
<dbReference type="SUPFAM" id="SSF47741">
    <property type="entry name" value="CO dehydrogenase ISP C-domain like"/>
    <property type="match status" value="1"/>
</dbReference>
<dbReference type="PROSITE" id="PS00197">
    <property type="entry name" value="2FE2S_FER_1"/>
    <property type="match status" value="1"/>
</dbReference>
<dbReference type="PROSITE" id="PS51085">
    <property type="entry name" value="2FE2S_FER_2"/>
    <property type="match status" value="1"/>
</dbReference>
<gene>
    <name type="primary">nicA</name>
    <name type="synonym">ndhS</name>
    <name type="ordered locus">PP_3947</name>
</gene>
<feature type="chain" id="PRO_0000418464" description="Nicotinate dehydrogenase subunit A">
    <location>
        <begin position="1"/>
        <end position="157"/>
    </location>
</feature>
<feature type="domain" description="2Fe-2S ferredoxin-type" evidence="2">
    <location>
        <begin position="3"/>
        <end position="79"/>
    </location>
</feature>
<feature type="binding site" evidence="2">
    <location>
        <position position="41"/>
    </location>
    <ligand>
        <name>[2Fe-2S] cluster</name>
        <dbReference type="ChEBI" id="CHEBI:190135"/>
    </ligand>
</feature>
<feature type="binding site" evidence="2">
    <location>
        <position position="46"/>
    </location>
    <ligand>
        <name>[2Fe-2S] cluster</name>
        <dbReference type="ChEBI" id="CHEBI:190135"/>
    </ligand>
</feature>
<feature type="binding site" evidence="2">
    <location>
        <position position="49"/>
    </location>
    <ligand>
        <name>[2Fe-2S] cluster</name>
        <dbReference type="ChEBI" id="CHEBI:190135"/>
    </ligand>
</feature>
<feature type="binding site" evidence="2">
    <location>
        <position position="61"/>
    </location>
    <ligand>
        <name>[2Fe-2S] cluster</name>
        <dbReference type="ChEBI" id="CHEBI:190135"/>
    </ligand>
</feature>
<proteinExistence type="evidence at protein level"/>
<organism>
    <name type="scientific">Pseudomonas putida (strain ATCC 47054 / DSM 6125 / CFBP 8728 / NCIMB 11950 / KT2440)</name>
    <dbReference type="NCBI Taxonomy" id="160488"/>
    <lineage>
        <taxon>Bacteria</taxon>
        <taxon>Pseudomonadati</taxon>
        <taxon>Pseudomonadota</taxon>
        <taxon>Gammaproteobacteria</taxon>
        <taxon>Pseudomonadales</taxon>
        <taxon>Pseudomonadaceae</taxon>
        <taxon>Pseudomonas</taxon>
    </lineage>
</organism>
<name>NICA_PSEPK</name>
<sequence length="157" mass="16686">MQTTISLQVNGQPVEVSAMPDTPLLLILRNDLCLNGPKYGCGLGECGACTVIIDGVAARSCVIPLAGAAGRNITTLEGLGSKAAPHPVQQAFIDEQAAQCGYCMNGMIMTAKALLDRIPEPSDEQIRNELSANLCRCGTHVEILRAVRRAAETRRKP</sequence>
<comment type="function">
    <text evidence="3 4">Subunit of the two-component enzyme NicAB that mediates nicotinate hydroxylation, the first step in the aerobic nicotinate degradation pathway. Mediates conversion of nicotinate into 6-hydroxynicotinate (6HNA).</text>
</comment>
<comment type="catalytic activity">
    <reaction evidence="3">
        <text>2 Fe(III)-[cytochrome] + nicotinate + H2O = 2 Fe(II)-[cytochrome] + 6-hydroxynicotinate + 2 H(+)</text>
        <dbReference type="Rhea" id="RHEA:27417"/>
        <dbReference type="Rhea" id="RHEA-COMP:11777"/>
        <dbReference type="Rhea" id="RHEA-COMP:11778"/>
        <dbReference type="ChEBI" id="CHEBI:15377"/>
        <dbReference type="ChEBI" id="CHEBI:15378"/>
        <dbReference type="ChEBI" id="CHEBI:29033"/>
        <dbReference type="ChEBI" id="CHEBI:29034"/>
        <dbReference type="ChEBI" id="CHEBI:32544"/>
        <dbReference type="ChEBI" id="CHEBI:57664"/>
        <dbReference type="EC" id="1.17.2.1"/>
    </reaction>
</comment>
<comment type="cofactor">
    <cofactor evidence="1">
        <name>[2Fe-2S] cluster</name>
        <dbReference type="ChEBI" id="CHEBI:190135"/>
    </cofactor>
    <text evidence="1">Binds 2 [2Fe-2S] clusters per subunit.</text>
</comment>
<comment type="pathway">
    <text evidence="3">Cofactor degradation; nicotinate degradation.</text>
</comment>
<comment type="induction">
    <text evidence="5">Repressed by NicS in the absence of 6-hydroxynicotinate (6HNA) or nicotinate inducers. In presence of 6HNA, repression is alleviated.</text>
</comment>
<comment type="disruption phenotype">
    <text evidence="3 4">Cells lacking both nicA and nicB lack the ability to hydroxylate nicotinate. Cells do not grow in a nicotinate medium but grow in a 6-hydroxynicotinate medium.</text>
</comment>